<proteinExistence type="inferred from homology"/>
<name>PYRH_METVS</name>
<dbReference type="EC" id="2.7.4.22" evidence="1"/>
<dbReference type="EMBL" id="CP000742">
    <property type="protein sequence ID" value="ABR55269.1"/>
    <property type="molecule type" value="Genomic_DNA"/>
</dbReference>
<dbReference type="RefSeq" id="WP_012066184.1">
    <property type="nucleotide sequence ID" value="NC_009634.1"/>
</dbReference>
<dbReference type="SMR" id="A6URZ7"/>
<dbReference type="STRING" id="406327.Mevan_1372"/>
<dbReference type="GeneID" id="5325159"/>
<dbReference type="KEGG" id="mvn:Mevan_1372"/>
<dbReference type="eggNOG" id="arCOG00858">
    <property type="taxonomic scope" value="Archaea"/>
</dbReference>
<dbReference type="HOGENOM" id="CLU_079546_0_0_2"/>
<dbReference type="OrthoDB" id="372251at2157"/>
<dbReference type="UniPathway" id="UPA00159">
    <property type="reaction ID" value="UER00275"/>
</dbReference>
<dbReference type="Proteomes" id="UP000001107">
    <property type="component" value="Chromosome"/>
</dbReference>
<dbReference type="GO" id="GO:0005737">
    <property type="term" value="C:cytoplasm"/>
    <property type="evidence" value="ECO:0007669"/>
    <property type="project" value="UniProtKB-SubCell"/>
</dbReference>
<dbReference type="GO" id="GO:0005524">
    <property type="term" value="F:ATP binding"/>
    <property type="evidence" value="ECO:0007669"/>
    <property type="project" value="UniProtKB-KW"/>
</dbReference>
<dbReference type="GO" id="GO:0033862">
    <property type="term" value="F:UMP kinase activity"/>
    <property type="evidence" value="ECO:0007669"/>
    <property type="project" value="UniProtKB-EC"/>
</dbReference>
<dbReference type="GO" id="GO:0044210">
    <property type="term" value="P:'de novo' CTP biosynthetic process"/>
    <property type="evidence" value="ECO:0007669"/>
    <property type="project" value="UniProtKB-UniRule"/>
</dbReference>
<dbReference type="GO" id="GO:0006225">
    <property type="term" value="P:UDP biosynthetic process"/>
    <property type="evidence" value="ECO:0007669"/>
    <property type="project" value="TreeGrafter"/>
</dbReference>
<dbReference type="CDD" id="cd04253">
    <property type="entry name" value="AAK_UMPK-PyrH-Pf"/>
    <property type="match status" value="1"/>
</dbReference>
<dbReference type="Gene3D" id="3.40.1160.10">
    <property type="entry name" value="Acetylglutamate kinase-like"/>
    <property type="match status" value="1"/>
</dbReference>
<dbReference type="HAMAP" id="MF_01220_A">
    <property type="entry name" value="PyrH_A"/>
    <property type="match status" value="1"/>
</dbReference>
<dbReference type="InterPro" id="IPR036393">
    <property type="entry name" value="AceGlu_kinase-like_sf"/>
</dbReference>
<dbReference type="InterPro" id="IPR001048">
    <property type="entry name" value="Asp/Glu/Uridylate_kinase"/>
</dbReference>
<dbReference type="InterPro" id="IPR001057">
    <property type="entry name" value="Glu/AcGlu_kinase"/>
</dbReference>
<dbReference type="InterPro" id="IPR011817">
    <property type="entry name" value="Uridylate_kinase"/>
</dbReference>
<dbReference type="InterPro" id="IPR011818">
    <property type="entry name" value="Uridylate_kinase_arch/spir"/>
</dbReference>
<dbReference type="NCBIfam" id="TIGR02076">
    <property type="entry name" value="pyrH_arch"/>
    <property type="match status" value="1"/>
</dbReference>
<dbReference type="PANTHER" id="PTHR42833">
    <property type="entry name" value="URIDYLATE KINASE"/>
    <property type="match status" value="1"/>
</dbReference>
<dbReference type="PANTHER" id="PTHR42833:SF4">
    <property type="entry name" value="URIDYLATE KINASE PUMPKIN, CHLOROPLASTIC"/>
    <property type="match status" value="1"/>
</dbReference>
<dbReference type="Pfam" id="PF00696">
    <property type="entry name" value="AA_kinase"/>
    <property type="match status" value="1"/>
</dbReference>
<dbReference type="PIRSF" id="PIRSF005650">
    <property type="entry name" value="Uridylate_kin"/>
    <property type="match status" value="1"/>
</dbReference>
<dbReference type="PRINTS" id="PR00474">
    <property type="entry name" value="GLU5KINASE"/>
</dbReference>
<dbReference type="SUPFAM" id="SSF53633">
    <property type="entry name" value="Carbamate kinase-like"/>
    <property type="match status" value="1"/>
</dbReference>
<evidence type="ECO:0000255" key="1">
    <source>
        <dbReference type="HAMAP-Rule" id="MF_01220"/>
    </source>
</evidence>
<comment type="function">
    <text evidence="1">Catalyzes the reversible phosphorylation of UMP to UDP.</text>
</comment>
<comment type="catalytic activity">
    <reaction evidence="1">
        <text>UMP + ATP = UDP + ADP</text>
        <dbReference type="Rhea" id="RHEA:24400"/>
        <dbReference type="ChEBI" id="CHEBI:30616"/>
        <dbReference type="ChEBI" id="CHEBI:57865"/>
        <dbReference type="ChEBI" id="CHEBI:58223"/>
        <dbReference type="ChEBI" id="CHEBI:456216"/>
        <dbReference type="EC" id="2.7.4.22"/>
    </reaction>
</comment>
<comment type="activity regulation">
    <text evidence="1">Inhibited by UTP.</text>
</comment>
<comment type="pathway">
    <text evidence="1">Pyrimidine metabolism; CTP biosynthesis via de novo pathway; UDP from UMP (UMPK route): step 1/1.</text>
</comment>
<comment type="subunit">
    <text evidence="1">Homohexamer.</text>
</comment>
<comment type="subcellular location">
    <subcellularLocation>
        <location evidence="1">Cytoplasm</location>
    </subcellularLocation>
</comment>
<comment type="similarity">
    <text evidence="1">Belongs to the UMP kinase family.</text>
</comment>
<protein>
    <recommendedName>
        <fullName evidence="1">Uridylate kinase</fullName>
        <shortName evidence="1">UK</shortName>
        <ecNumber evidence="1">2.7.4.22</ecNumber>
    </recommendedName>
    <alternativeName>
        <fullName evidence="1">Uridine monophosphate kinase</fullName>
        <shortName evidence="1">UMP kinase</shortName>
        <shortName evidence="1">UMPK</shortName>
    </alternativeName>
</protein>
<sequence>MDIVFALGGSVLMPKDGASAENIKSYAQVFKKLKDMGHNVSIVVGGGNTAREYIKVSREFTNESVCDEIGIMATRMNAMLLISALSKYSVNFVPTNFKDAEMILNLGKILVMGGTHPAHTTDAVSATLAEFTNADLLVIATNVDGVYTKDPRTNNDAKKLEKMTTKELIEITGSNSISAGSSSVVDSLASKIIDRAKLKTIVVKGTPDEILKSVLGGHDGTIIIP</sequence>
<gene>
    <name evidence="1" type="primary">pyrH</name>
    <name type="ordered locus">Mevan_1372</name>
</gene>
<organism>
    <name type="scientific">Methanococcus vannielii (strain ATCC 35089 / DSM 1224 / JCM 13029 / OCM 148 / SB)</name>
    <dbReference type="NCBI Taxonomy" id="406327"/>
    <lineage>
        <taxon>Archaea</taxon>
        <taxon>Methanobacteriati</taxon>
        <taxon>Methanobacteriota</taxon>
        <taxon>Methanomada group</taxon>
        <taxon>Methanococci</taxon>
        <taxon>Methanococcales</taxon>
        <taxon>Methanococcaceae</taxon>
        <taxon>Methanococcus</taxon>
    </lineage>
</organism>
<feature type="chain" id="PRO_1000053960" description="Uridylate kinase">
    <location>
        <begin position="1"/>
        <end position="225"/>
    </location>
</feature>
<feature type="binding site" evidence="1">
    <location>
        <begin position="9"/>
        <end position="10"/>
    </location>
    <ligand>
        <name>ATP</name>
        <dbReference type="ChEBI" id="CHEBI:30616"/>
    </ligand>
</feature>
<feature type="binding site" evidence="1">
    <location>
        <position position="46"/>
    </location>
    <ligand>
        <name>UMP</name>
        <dbReference type="ChEBI" id="CHEBI:57865"/>
    </ligand>
</feature>
<feature type="binding site" evidence="1">
    <location>
        <position position="47"/>
    </location>
    <ligand>
        <name>ATP</name>
        <dbReference type="ChEBI" id="CHEBI:30616"/>
    </ligand>
</feature>
<feature type="binding site" evidence="1">
    <location>
        <position position="51"/>
    </location>
    <ligand>
        <name>ATP</name>
        <dbReference type="ChEBI" id="CHEBI:30616"/>
    </ligand>
</feature>
<feature type="binding site" evidence="1">
    <location>
        <position position="67"/>
    </location>
    <ligand>
        <name>UMP</name>
        <dbReference type="ChEBI" id="CHEBI:57865"/>
    </ligand>
</feature>
<feature type="binding site" evidence="1">
    <location>
        <begin position="115"/>
        <end position="121"/>
    </location>
    <ligand>
        <name>UMP</name>
        <dbReference type="ChEBI" id="CHEBI:57865"/>
    </ligand>
</feature>
<feature type="binding site" evidence="1">
    <location>
        <position position="141"/>
    </location>
    <ligand>
        <name>ATP</name>
        <dbReference type="ChEBI" id="CHEBI:30616"/>
    </ligand>
</feature>
<feature type="binding site" evidence="1">
    <location>
        <position position="142"/>
    </location>
    <ligand>
        <name>ATP</name>
        <dbReference type="ChEBI" id="CHEBI:30616"/>
    </ligand>
</feature>
<feature type="binding site" evidence="1">
    <location>
        <position position="147"/>
    </location>
    <ligand>
        <name>ATP</name>
        <dbReference type="ChEBI" id="CHEBI:30616"/>
    </ligand>
</feature>
<feature type="binding site" evidence="1">
    <location>
        <position position="150"/>
    </location>
    <ligand>
        <name>ATP</name>
        <dbReference type="ChEBI" id="CHEBI:30616"/>
    </ligand>
</feature>
<reference key="1">
    <citation type="submission" date="2007-06" db="EMBL/GenBank/DDBJ databases">
        <title>Complete sequence of Methanococcus vannielii SB.</title>
        <authorList>
            <consortium name="US DOE Joint Genome Institute"/>
            <person name="Copeland A."/>
            <person name="Lucas S."/>
            <person name="Lapidus A."/>
            <person name="Barry K."/>
            <person name="Glavina del Rio T."/>
            <person name="Dalin E."/>
            <person name="Tice H."/>
            <person name="Pitluck S."/>
            <person name="Chain P."/>
            <person name="Malfatti S."/>
            <person name="Shin M."/>
            <person name="Vergez L."/>
            <person name="Schmutz J."/>
            <person name="Larimer F."/>
            <person name="Land M."/>
            <person name="Hauser L."/>
            <person name="Kyrpides N."/>
            <person name="Anderson I."/>
            <person name="Sieprawska-Lupa M."/>
            <person name="Whitman W.B."/>
            <person name="Richardson P."/>
        </authorList>
    </citation>
    <scope>NUCLEOTIDE SEQUENCE [LARGE SCALE GENOMIC DNA]</scope>
    <source>
        <strain>ATCC 35089 / DSM 1224 / JCM 13029 / OCM 148 / SB</strain>
    </source>
</reference>
<keyword id="KW-0067">ATP-binding</keyword>
<keyword id="KW-0963">Cytoplasm</keyword>
<keyword id="KW-0418">Kinase</keyword>
<keyword id="KW-0547">Nucleotide-binding</keyword>
<keyword id="KW-0665">Pyrimidine biosynthesis</keyword>
<keyword id="KW-0808">Transferase</keyword>
<accession>A6URZ7</accession>